<reference evidence="8" key="1">
    <citation type="journal article" date="2010" name="J. Proteome Res.">
        <title>Extensive de novo sequencing of new parvalbumin isoforms using a novel combination of bottom-up proteomics, accurate molecular mass measurement by FTICR-MS, and selected MS/MS ion monitoring.</title>
        <authorList>
            <person name="Carrera M."/>
            <person name="Canas B."/>
            <person name="Vazquez J."/>
            <person name="Gallardo J.M."/>
        </authorList>
    </citation>
    <scope>PROTEIN SEQUENCE</scope>
    <scope>MASS SPECTROMETRY</scope>
    <scope>ACETYLATION AT ALA-1</scope>
    <source>
        <tissue evidence="6">Muscle</tissue>
    </source>
</reference>
<comment type="function">
    <text evidence="2 3">In muscle, parvalbumin is thought to be involved in relaxation after contraction. It binds two calcium ions (By similarity).</text>
</comment>
<comment type="mass spectrometry" mass="11329.789" error="0.0417" method="Electrospray" evidence="6"/>
<comment type="miscellaneous">
    <text evidence="2 6">Is regarded as an important allergen.</text>
</comment>
<comment type="miscellaneous">
    <text evidence="6">On the 2D-gel the determined pI of this protein is: 4.51, its MW is: 11.30 kDa.</text>
</comment>
<comment type="similarity">
    <text evidence="4">Belongs to the parvalbumin family.</text>
</comment>
<dbReference type="SMR" id="P86773"/>
<dbReference type="iPTMnet" id="P86773"/>
<dbReference type="GO" id="GO:0005737">
    <property type="term" value="C:cytoplasm"/>
    <property type="evidence" value="ECO:0007669"/>
    <property type="project" value="TreeGrafter"/>
</dbReference>
<dbReference type="GO" id="GO:0005509">
    <property type="term" value="F:calcium ion binding"/>
    <property type="evidence" value="ECO:0007669"/>
    <property type="project" value="InterPro"/>
</dbReference>
<dbReference type="CDD" id="cd16255">
    <property type="entry name" value="EFh_parvalbumin_beta"/>
    <property type="match status" value="1"/>
</dbReference>
<dbReference type="FunFam" id="1.10.238.10:FF:000060">
    <property type="entry name" value="Parvalbumin, thymic"/>
    <property type="match status" value="1"/>
</dbReference>
<dbReference type="Gene3D" id="1.10.238.10">
    <property type="entry name" value="EF-hand"/>
    <property type="match status" value="1"/>
</dbReference>
<dbReference type="InterPro" id="IPR011992">
    <property type="entry name" value="EF-hand-dom_pair"/>
</dbReference>
<dbReference type="InterPro" id="IPR018247">
    <property type="entry name" value="EF_Hand_1_Ca_BS"/>
</dbReference>
<dbReference type="InterPro" id="IPR002048">
    <property type="entry name" value="EF_hand_dom"/>
</dbReference>
<dbReference type="InterPro" id="IPR008080">
    <property type="entry name" value="Parvalbumin"/>
</dbReference>
<dbReference type="PANTHER" id="PTHR11653:SF12">
    <property type="entry name" value="PARVALBUMIN"/>
    <property type="match status" value="1"/>
</dbReference>
<dbReference type="PANTHER" id="PTHR11653">
    <property type="entry name" value="PARVALBUMIN ALPHA"/>
    <property type="match status" value="1"/>
</dbReference>
<dbReference type="Pfam" id="PF13499">
    <property type="entry name" value="EF-hand_7"/>
    <property type="match status" value="1"/>
</dbReference>
<dbReference type="PRINTS" id="PR01697">
    <property type="entry name" value="PARVALBUMIN"/>
</dbReference>
<dbReference type="SUPFAM" id="SSF47473">
    <property type="entry name" value="EF-hand"/>
    <property type="match status" value="1"/>
</dbReference>
<dbReference type="PROSITE" id="PS00018">
    <property type="entry name" value="EF_HAND_1"/>
    <property type="match status" value="2"/>
</dbReference>
<dbReference type="PROSITE" id="PS50222">
    <property type="entry name" value="EF_HAND_2"/>
    <property type="match status" value="2"/>
</dbReference>
<keyword id="KW-0007">Acetylation</keyword>
<keyword id="KW-0020">Allergen</keyword>
<keyword id="KW-0106">Calcium</keyword>
<keyword id="KW-0903">Direct protein sequencing</keyword>
<keyword id="KW-0479">Metal-binding</keyword>
<keyword id="KW-0514">Muscle protein</keyword>
<keyword id="KW-0677">Repeat</keyword>
<organism>
    <name type="scientific">Merluccius polli</name>
    <name type="common">Benguela hake</name>
    <name type="synonym">Merluccius cadenati</name>
    <dbReference type="NCBI Taxonomy" id="89951"/>
    <lineage>
        <taxon>Eukaryota</taxon>
        <taxon>Metazoa</taxon>
        <taxon>Chordata</taxon>
        <taxon>Craniata</taxon>
        <taxon>Vertebrata</taxon>
        <taxon>Euteleostomi</taxon>
        <taxon>Actinopterygii</taxon>
        <taxon>Neopterygii</taxon>
        <taxon>Teleostei</taxon>
        <taxon>Neoteleostei</taxon>
        <taxon>Acanthomorphata</taxon>
        <taxon>Zeiogadaria</taxon>
        <taxon>Gadariae</taxon>
        <taxon>Gadiformes</taxon>
        <taxon>Gadoidei</taxon>
        <taxon>Merlucciidae</taxon>
        <taxon>Merluccius</taxon>
    </lineage>
</organism>
<name>PRVB1_MERPO</name>
<evidence type="ECO:0000250" key="1">
    <source>
        <dbReference type="UniProtKB" id="P02621"/>
    </source>
</evidence>
<evidence type="ECO:0000250" key="2">
    <source>
        <dbReference type="UniProtKB" id="P02622"/>
    </source>
</evidence>
<evidence type="ECO:0000250" key="3">
    <source>
        <dbReference type="UniProtKB" id="P02624"/>
    </source>
</evidence>
<evidence type="ECO:0000255" key="4"/>
<evidence type="ECO:0000255" key="5">
    <source>
        <dbReference type="PROSITE-ProRule" id="PRU00448"/>
    </source>
</evidence>
<evidence type="ECO:0000269" key="6">
    <source>
    </source>
</evidence>
<evidence type="ECO:0000303" key="7">
    <source>
    </source>
</evidence>
<evidence type="ECO:0000305" key="8"/>
<protein>
    <recommendedName>
        <fullName evidence="7">Parvalbumin beta 1</fullName>
    </recommendedName>
</protein>
<accession>P86773</accession>
<proteinExistence type="evidence at protein level"/>
<feature type="chain" id="PRO_0000399431" description="Parvalbumin beta 1">
    <location>
        <begin position="1"/>
        <end position="108"/>
    </location>
</feature>
<feature type="domain" description="EF-hand 1" evidence="5">
    <location>
        <begin position="38"/>
        <end position="73"/>
    </location>
</feature>
<feature type="domain" description="EF-hand 2" evidence="5">
    <location>
        <begin position="77"/>
        <end position="108"/>
    </location>
</feature>
<feature type="binding site" evidence="1 5">
    <location>
        <position position="51"/>
    </location>
    <ligand>
        <name>Ca(2+)</name>
        <dbReference type="ChEBI" id="CHEBI:29108"/>
        <label>1</label>
    </ligand>
</feature>
<feature type="binding site" evidence="1 5">
    <location>
        <position position="53"/>
    </location>
    <ligand>
        <name>Ca(2+)</name>
        <dbReference type="ChEBI" id="CHEBI:29108"/>
        <label>1</label>
    </ligand>
</feature>
<feature type="binding site" evidence="1 5">
    <location>
        <position position="55"/>
    </location>
    <ligand>
        <name>Ca(2+)</name>
        <dbReference type="ChEBI" id="CHEBI:29108"/>
        <label>1</label>
    </ligand>
</feature>
<feature type="binding site" evidence="1">
    <location>
        <position position="57"/>
    </location>
    <ligand>
        <name>Ca(2+)</name>
        <dbReference type="ChEBI" id="CHEBI:29108"/>
        <label>1</label>
    </ligand>
</feature>
<feature type="binding site" evidence="1">
    <location>
        <position position="59"/>
    </location>
    <ligand>
        <name>Ca(2+)</name>
        <dbReference type="ChEBI" id="CHEBI:29108"/>
        <label>1</label>
    </ligand>
</feature>
<feature type="binding site" evidence="1 5">
    <location>
        <position position="62"/>
    </location>
    <ligand>
        <name>Ca(2+)</name>
        <dbReference type="ChEBI" id="CHEBI:29108"/>
        <label>1</label>
    </ligand>
</feature>
<feature type="binding site" evidence="1 5">
    <location>
        <position position="90"/>
    </location>
    <ligand>
        <name>Ca(2+)</name>
        <dbReference type="ChEBI" id="CHEBI:29108"/>
        <label>2</label>
    </ligand>
</feature>
<feature type="binding site" evidence="1 5">
    <location>
        <position position="92"/>
    </location>
    <ligand>
        <name>Ca(2+)</name>
        <dbReference type="ChEBI" id="CHEBI:29108"/>
        <label>2</label>
    </ligand>
</feature>
<feature type="binding site" evidence="1 5">
    <location>
        <position position="94"/>
    </location>
    <ligand>
        <name>Ca(2+)</name>
        <dbReference type="ChEBI" id="CHEBI:29108"/>
        <label>2</label>
    </ligand>
</feature>
<feature type="binding site" evidence="5">
    <location>
        <position position="96"/>
    </location>
    <ligand>
        <name>Ca(2+)</name>
        <dbReference type="ChEBI" id="CHEBI:29108"/>
        <label>2</label>
    </ligand>
</feature>
<feature type="binding site" evidence="1 5">
    <location>
        <position position="101"/>
    </location>
    <ligand>
        <name>Ca(2+)</name>
        <dbReference type="ChEBI" id="CHEBI:29108"/>
        <label>2</label>
    </ligand>
</feature>
<feature type="modified residue" description="N-acetylalanine" evidence="6">
    <location>
        <position position="1"/>
    </location>
</feature>
<feature type="unsure residue" description="I or L" evidence="6">
    <location>
        <position position="5"/>
    </location>
</feature>
<feature type="unsure residue" description="L or I" evidence="6">
    <location>
        <position position="6"/>
    </location>
</feature>
<feature type="unsure residue" description="I or L" evidence="6">
    <location>
        <position position="11"/>
    </location>
</feature>
<feature type="unsure residue" description="L or I" evidence="6">
    <location>
        <position position="15"/>
    </location>
</feature>
<feature type="unsure residue" description="K or Q" evidence="6">
    <location>
        <position position="19"/>
    </location>
</feature>
<feature type="unsure residue" description="K or Q" evidence="6">
    <location>
        <position position="25"/>
    </location>
</feature>
<feature type="unsure residue" description="K or Q" evidence="6">
    <location>
        <position position="32"/>
    </location>
</feature>
<feature type="unsure residue" description="I or L" evidence="6">
    <location>
        <position position="33"/>
    </location>
</feature>
<feature type="unsure residue" description="L or I" evidence="6">
    <location>
        <position position="35"/>
    </location>
</feature>
<feature type="unsure residue" description="K or Q" evidence="6">
    <location>
        <position position="36"/>
    </location>
</feature>
<feature type="unsure residue" description="K or Q" evidence="6">
    <location>
        <position position="38"/>
    </location>
</feature>
<feature type="unsure residue" description="I or L" evidence="6">
    <location>
        <position position="43"/>
    </location>
</feature>
<feature type="unsure residue" description="K or Q" evidence="6">
    <location>
        <position position="44"/>
    </location>
</feature>
<feature type="unsure residue" description="K or Q" evidence="6">
    <location>
        <position position="45"/>
    </location>
</feature>
<feature type="unsure residue" description="I or L" evidence="6">
    <location>
        <position position="49"/>
    </location>
</feature>
<feature type="unsure residue" description="I or L" evidence="6">
    <location>
        <position position="50"/>
    </location>
</feature>
<feature type="unsure residue" description="Q or K" evidence="6">
    <location>
        <position position="52"/>
    </location>
</feature>
<feature type="unsure residue" description="K or Q" evidence="6">
    <location>
        <position position="54"/>
    </location>
</feature>
<feature type="unsure residue" description="L or I" evidence="6">
    <location>
        <position position="63"/>
    </location>
</feature>
<feature type="unsure residue" description="K or Q" evidence="6">
    <location>
        <position position="64"/>
    </location>
</feature>
<feature type="unsure residue" description="L or I" evidence="6">
    <location>
        <position position="65"/>
    </location>
</feature>
<feature type="unsure residue" description="L or I" evidence="6">
    <location>
        <position position="67"/>
    </location>
</feature>
<feature type="unsure residue" description="Q or K" evidence="6">
    <location>
        <position position="68"/>
    </location>
</feature>
<feature type="unsure residue" description="L or I" evidence="6">
    <location>
        <position position="77"/>
    </location>
</feature>
<feature type="unsure residue" description="L or I" evidence="6">
    <location>
        <position position="86"/>
    </location>
</feature>
<feature type="unsure residue" description="K or Q" evidence="6">
    <location>
        <position position="87"/>
    </location>
</feature>
<feature type="unsure residue" description="K or Q" evidence="6">
    <location>
        <position position="96"/>
    </location>
</feature>
<feature type="unsure residue" description="I or L" evidence="6">
    <location>
        <position position="97"/>
    </location>
</feature>
<feature type="unsure residue" description="K or Q" evidence="6">
    <location>
        <position position="107"/>
    </location>
</feature>
<sequence length="108" mass="11295">AFAGILADADITAALAACKAEGTFKHGEFFTKIGLKGKSAADIKKVFGIIDQDKSDFVEEDELKLFLQNFSAGARALTDAETATFLKAGDSDGDGKIGVDEFAAMVKG</sequence>